<organism>
    <name type="scientific">Homo sapiens</name>
    <name type="common">Human</name>
    <dbReference type="NCBI Taxonomy" id="9606"/>
    <lineage>
        <taxon>Eukaryota</taxon>
        <taxon>Metazoa</taxon>
        <taxon>Chordata</taxon>
        <taxon>Craniata</taxon>
        <taxon>Vertebrata</taxon>
        <taxon>Euteleostomi</taxon>
        <taxon>Mammalia</taxon>
        <taxon>Eutheria</taxon>
        <taxon>Euarchontoglires</taxon>
        <taxon>Primates</taxon>
        <taxon>Haplorrhini</taxon>
        <taxon>Catarrhini</taxon>
        <taxon>Hominidae</taxon>
        <taxon>Homo</taxon>
    </lineage>
</organism>
<feature type="chain" id="PRO_0000205156" description="Protein transport protein Sec24C">
    <location>
        <begin position="1"/>
        <end position="1094"/>
    </location>
</feature>
<feature type="repeat" description="Gelsolin-like" evidence="1">
    <location>
        <begin position="962"/>
        <end position="1034"/>
    </location>
</feature>
<feature type="region of interest" description="Disordered" evidence="2">
    <location>
        <begin position="1"/>
        <end position="338"/>
    </location>
</feature>
<feature type="region of interest" description="Zinc finger-like">
    <location>
        <begin position="425"/>
        <end position="450"/>
    </location>
</feature>
<feature type="compositionally biased region" description="Pro residues" evidence="2">
    <location>
        <begin position="8"/>
        <end position="19"/>
    </location>
</feature>
<feature type="compositionally biased region" description="Low complexity" evidence="2">
    <location>
        <begin position="20"/>
        <end position="29"/>
    </location>
</feature>
<feature type="compositionally biased region" description="Low complexity" evidence="2">
    <location>
        <begin position="60"/>
        <end position="77"/>
    </location>
</feature>
<feature type="compositionally biased region" description="Polar residues" evidence="2">
    <location>
        <begin position="90"/>
        <end position="101"/>
    </location>
</feature>
<feature type="compositionally biased region" description="Pro residues" evidence="2">
    <location>
        <begin position="123"/>
        <end position="132"/>
    </location>
</feature>
<feature type="compositionally biased region" description="Polar residues" evidence="2">
    <location>
        <begin position="133"/>
        <end position="144"/>
    </location>
</feature>
<feature type="compositionally biased region" description="Polar residues" evidence="2">
    <location>
        <begin position="165"/>
        <end position="175"/>
    </location>
</feature>
<feature type="compositionally biased region" description="Polar residues" evidence="2">
    <location>
        <begin position="189"/>
        <end position="215"/>
    </location>
</feature>
<feature type="compositionally biased region" description="Polar residues" evidence="2">
    <location>
        <begin position="240"/>
        <end position="251"/>
    </location>
</feature>
<feature type="compositionally biased region" description="Low complexity" evidence="2">
    <location>
        <begin position="273"/>
        <end position="282"/>
    </location>
</feature>
<feature type="binding site" evidence="16">
    <location>
        <position position="425"/>
    </location>
    <ligand>
        <name>Zn(2+)</name>
        <dbReference type="ChEBI" id="CHEBI:29105"/>
    </ligand>
</feature>
<feature type="binding site" evidence="16">
    <location>
        <position position="428"/>
    </location>
    <ligand>
        <name>Zn(2+)</name>
        <dbReference type="ChEBI" id="CHEBI:29105"/>
    </ligand>
</feature>
<feature type="binding site" evidence="16">
    <location>
        <position position="447"/>
    </location>
    <ligand>
        <name>Zn(2+)</name>
        <dbReference type="ChEBI" id="CHEBI:29105"/>
    </ligand>
</feature>
<feature type="binding site" evidence="16">
    <location>
        <position position="450"/>
    </location>
    <ligand>
        <name>Zn(2+)</name>
        <dbReference type="ChEBI" id="CHEBI:29105"/>
    </ligand>
</feature>
<feature type="modified residue" description="Phosphothreonine" evidence="17">
    <location>
        <position position="214"/>
    </location>
</feature>
<feature type="splice variant" id="VSP_056516" description="In isoform 2." evidence="12">
    <location>
        <begin position="1"/>
        <end position="752"/>
    </location>
</feature>
<feature type="sequence variant" id="VAR_058690" description="In dbSNP:rs17851695." evidence="6">
    <original>P</original>
    <variation>S</variation>
    <location>
        <position position="109"/>
    </location>
</feature>
<feature type="sequence variant" id="VAR_057174" description="In dbSNP:rs16930872.">
    <original>L</original>
    <variation>P</variation>
    <location>
        <position position="934"/>
    </location>
</feature>
<feature type="mutagenesis site" description="Loss of packaging into COPII-coated vesicles of the IxM motif-containing cargos GOSR2 and STX5." evidence="9">
    <original>LIL</original>
    <variation>AAA</variation>
    <location>
        <begin position="895"/>
        <end position="897"/>
    </location>
</feature>
<feature type="helix" evidence="18">
    <location>
        <begin position="331"/>
        <end position="340"/>
    </location>
</feature>
<feature type="strand" evidence="18">
    <location>
        <begin position="343"/>
        <end position="346"/>
    </location>
</feature>
<feature type="strand" evidence="18">
    <location>
        <begin position="362"/>
        <end position="364"/>
    </location>
</feature>
<feature type="strand" evidence="18">
    <location>
        <begin position="366"/>
        <end position="368"/>
    </location>
</feature>
<feature type="turn" evidence="18">
    <location>
        <begin position="371"/>
        <end position="373"/>
    </location>
</feature>
<feature type="strand" evidence="18">
    <location>
        <begin position="374"/>
        <end position="384"/>
    </location>
</feature>
<feature type="helix" evidence="18">
    <location>
        <begin position="385"/>
        <end position="391"/>
    </location>
</feature>
<feature type="strand" evidence="18">
    <location>
        <begin position="395"/>
        <end position="399"/>
    </location>
</feature>
<feature type="strand" evidence="18">
    <location>
        <begin position="413"/>
        <end position="415"/>
    </location>
</feature>
<feature type="helix" evidence="18">
    <location>
        <begin position="418"/>
        <end position="420"/>
    </location>
</feature>
<feature type="turn" evidence="18">
    <location>
        <begin position="426"/>
        <end position="428"/>
    </location>
</feature>
<feature type="strand" evidence="18">
    <location>
        <begin position="437"/>
        <end position="439"/>
    </location>
</feature>
<feature type="helix" evidence="18">
    <location>
        <begin position="440"/>
        <end position="442"/>
    </location>
</feature>
<feature type="strand" evidence="18">
    <location>
        <begin position="444"/>
        <end position="446"/>
    </location>
</feature>
<feature type="turn" evidence="18">
    <location>
        <begin position="448"/>
        <end position="450"/>
    </location>
</feature>
<feature type="strand" evidence="18">
    <location>
        <begin position="453"/>
        <end position="455"/>
    </location>
</feature>
<feature type="turn" evidence="18">
    <location>
        <begin position="458"/>
        <end position="461"/>
    </location>
</feature>
<feature type="helix" evidence="18">
    <location>
        <begin position="462"/>
        <end position="466"/>
    </location>
</feature>
<feature type="strand" evidence="18">
    <location>
        <begin position="467"/>
        <end position="469"/>
    </location>
</feature>
<feature type="helix" evidence="18">
    <location>
        <begin position="477"/>
        <end position="480"/>
    </location>
</feature>
<feature type="strand" evidence="18">
    <location>
        <begin position="482"/>
        <end position="487"/>
    </location>
</feature>
<feature type="helix" evidence="18">
    <location>
        <begin position="490"/>
        <end position="492"/>
    </location>
</feature>
<feature type="helix" evidence="18">
    <location>
        <begin position="494"/>
        <end position="496"/>
    </location>
</feature>
<feature type="strand" evidence="18">
    <location>
        <begin position="503"/>
        <end position="509"/>
    </location>
</feature>
<feature type="helix" evidence="18">
    <location>
        <begin position="512"/>
        <end position="516"/>
    </location>
</feature>
<feature type="helix" evidence="18">
    <location>
        <begin position="519"/>
        <end position="530"/>
    </location>
</feature>
<feature type="helix" evidence="18">
    <location>
        <begin position="531"/>
        <end position="533"/>
    </location>
</feature>
<feature type="strand" evidence="18">
    <location>
        <begin position="546"/>
        <end position="560"/>
    </location>
</feature>
<feature type="strand" evidence="18">
    <location>
        <begin position="569"/>
        <end position="573"/>
    </location>
</feature>
<feature type="turn" evidence="18">
    <location>
        <begin position="576"/>
        <end position="578"/>
    </location>
</feature>
<feature type="strand" evidence="18">
    <location>
        <begin position="587"/>
        <end position="589"/>
    </location>
</feature>
<feature type="turn" evidence="18">
    <location>
        <begin position="591"/>
        <end position="594"/>
    </location>
</feature>
<feature type="helix" evidence="18">
    <location>
        <begin position="595"/>
        <end position="609"/>
    </location>
</feature>
<feature type="helix" evidence="18">
    <location>
        <begin position="620"/>
        <end position="632"/>
    </location>
</feature>
<feature type="strand" evidence="18">
    <location>
        <begin position="637"/>
        <end position="643"/>
    </location>
</feature>
<feature type="strand" evidence="18">
    <location>
        <begin position="649"/>
        <end position="651"/>
    </location>
</feature>
<feature type="helix" evidence="18">
    <location>
        <begin position="661"/>
        <end position="663"/>
    </location>
</feature>
<feature type="helix" evidence="18">
    <location>
        <begin position="669"/>
        <end position="672"/>
    </location>
</feature>
<feature type="helix" evidence="18">
    <location>
        <begin position="679"/>
        <end position="689"/>
    </location>
</feature>
<feature type="strand" evidence="18">
    <location>
        <begin position="692"/>
        <end position="698"/>
    </location>
</feature>
<feature type="helix" evidence="18">
    <location>
        <begin position="706"/>
        <end position="709"/>
    </location>
</feature>
<feature type="helix" evidence="18">
    <location>
        <begin position="711"/>
        <end position="715"/>
    </location>
</feature>
<feature type="strand" evidence="18">
    <location>
        <begin position="720"/>
        <end position="722"/>
    </location>
</feature>
<feature type="helix" evidence="18">
    <location>
        <begin position="728"/>
        <end position="744"/>
    </location>
</feature>
<feature type="strand" evidence="18">
    <location>
        <begin position="747"/>
        <end position="757"/>
    </location>
</feature>
<feature type="strand" evidence="18">
    <location>
        <begin position="761"/>
        <end position="769"/>
    </location>
</feature>
<feature type="strand" evidence="18">
    <location>
        <begin position="773"/>
        <end position="776"/>
    </location>
</feature>
<feature type="strand" evidence="18">
    <location>
        <begin position="778"/>
        <end position="784"/>
    </location>
</feature>
<feature type="strand" evidence="18">
    <location>
        <begin position="789"/>
        <end position="797"/>
    </location>
</feature>
<feature type="turn" evidence="18">
    <location>
        <begin position="801"/>
        <end position="803"/>
    </location>
</feature>
<feature type="strand" evidence="18">
    <location>
        <begin position="805"/>
        <end position="814"/>
    </location>
</feature>
<feature type="strand" evidence="18">
    <location>
        <begin position="820"/>
        <end position="834"/>
    </location>
</feature>
<feature type="helix" evidence="18">
    <location>
        <begin position="835"/>
        <end position="840"/>
    </location>
</feature>
<feature type="helix" evidence="18">
    <location>
        <begin position="844"/>
        <end position="858"/>
    </location>
</feature>
<feature type="turn" evidence="18">
    <location>
        <begin position="859"/>
        <end position="861"/>
    </location>
</feature>
<feature type="helix" evidence="18">
    <location>
        <begin position="864"/>
        <end position="885"/>
    </location>
</feature>
<feature type="helix" evidence="18">
    <location>
        <begin position="899"/>
        <end position="901"/>
    </location>
</feature>
<feature type="helix" evidence="18">
    <location>
        <begin position="904"/>
        <end position="912"/>
    </location>
</feature>
<feature type="turn" evidence="18">
    <location>
        <begin position="915"/>
        <end position="917"/>
    </location>
</feature>
<feature type="helix" evidence="18">
    <location>
        <begin position="925"/>
        <end position="937"/>
    </location>
</feature>
<feature type="helix" evidence="18">
    <location>
        <begin position="940"/>
        <end position="947"/>
    </location>
</feature>
<feature type="strand" evidence="18">
    <location>
        <begin position="950"/>
        <end position="953"/>
    </location>
</feature>
<feature type="helix" evidence="18">
    <location>
        <begin position="972"/>
        <end position="974"/>
    </location>
</feature>
<feature type="strand" evidence="18">
    <location>
        <begin position="980"/>
        <end position="984"/>
    </location>
</feature>
<feature type="strand" evidence="18">
    <location>
        <begin position="986"/>
        <end position="993"/>
    </location>
</feature>
<feature type="helix" evidence="18">
    <location>
        <begin position="999"/>
        <end position="1006"/>
    </location>
</feature>
<feature type="helix" evidence="18">
    <location>
        <begin position="1011"/>
        <end position="1013"/>
    </location>
</feature>
<feature type="helix" evidence="18">
    <location>
        <begin position="1027"/>
        <end position="1040"/>
    </location>
</feature>
<feature type="strand" evidence="18">
    <location>
        <begin position="1043"/>
        <end position="1045"/>
    </location>
</feature>
<feature type="strand" evidence="18">
    <location>
        <begin position="1048"/>
        <end position="1056"/>
    </location>
</feature>
<feature type="helix" evidence="18">
    <location>
        <begin position="1059"/>
        <end position="1063"/>
    </location>
</feature>
<feature type="turn" evidence="18">
    <location>
        <begin position="1072"/>
        <end position="1074"/>
    </location>
</feature>
<feature type="helix" evidence="18">
    <location>
        <begin position="1078"/>
        <end position="1092"/>
    </location>
</feature>
<name>SC24C_HUMAN</name>
<evidence type="ECO:0000255" key="1"/>
<evidence type="ECO:0000256" key="2">
    <source>
        <dbReference type="SAM" id="MobiDB-lite"/>
    </source>
</evidence>
<evidence type="ECO:0000269" key="3">
    <source>
    </source>
</evidence>
<evidence type="ECO:0000269" key="4">
    <source>
    </source>
</evidence>
<evidence type="ECO:0000269" key="5">
    <source>
    </source>
</evidence>
<evidence type="ECO:0000269" key="6">
    <source>
    </source>
</evidence>
<evidence type="ECO:0000269" key="7">
    <source>
    </source>
</evidence>
<evidence type="ECO:0000269" key="8">
    <source>
    </source>
</evidence>
<evidence type="ECO:0000269" key="9">
    <source>
    </source>
</evidence>
<evidence type="ECO:0000269" key="10">
    <source>
    </source>
</evidence>
<evidence type="ECO:0000269" key="11">
    <source>
    </source>
</evidence>
<evidence type="ECO:0000303" key="12">
    <source>
    </source>
</evidence>
<evidence type="ECO:0000305" key="13"/>
<evidence type="ECO:0000312" key="14">
    <source>
        <dbReference type="EMBL" id="BAA07558.2"/>
    </source>
</evidence>
<evidence type="ECO:0000312" key="15">
    <source>
        <dbReference type="HGNC" id="HGNC:10705"/>
    </source>
</evidence>
<evidence type="ECO:0007744" key="16">
    <source>
        <dbReference type="PDB" id="3EH2"/>
    </source>
</evidence>
<evidence type="ECO:0007744" key="17">
    <source>
    </source>
</evidence>
<evidence type="ECO:0007829" key="18">
    <source>
        <dbReference type="PDB" id="3EH2"/>
    </source>
</evidence>
<reference key="1">
    <citation type="journal article" date="1994" name="DNA Res.">
        <title>Prediction of the coding sequences of unidentified human genes. II. The coding sequences of 40 new genes (KIAA0041-KIAA0080) deduced by analysis of cDNA clones from human cell line KG-1.</title>
        <authorList>
            <person name="Nomura N."/>
            <person name="Nagase T."/>
            <person name="Miyajima N."/>
            <person name="Sazuka T."/>
            <person name="Tanaka A."/>
            <person name="Sato S."/>
            <person name="Seki N."/>
            <person name="Kawarabayasi Y."/>
            <person name="Ishikawa K."/>
            <person name="Tabata S."/>
        </authorList>
    </citation>
    <scope>NUCLEOTIDE SEQUENCE [LARGE SCALE MRNA] (ISOFORM 1)</scope>
    <source>
        <tissue>Bone marrow</tissue>
    </source>
</reference>
<reference key="2">
    <citation type="journal article" date="2004" name="Nat. Genet.">
        <title>Complete sequencing and characterization of 21,243 full-length human cDNAs.</title>
        <authorList>
            <person name="Ota T."/>
            <person name="Suzuki Y."/>
            <person name="Nishikawa T."/>
            <person name="Otsuki T."/>
            <person name="Sugiyama T."/>
            <person name="Irie R."/>
            <person name="Wakamatsu A."/>
            <person name="Hayashi K."/>
            <person name="Sato H."/>
            <person name="Nagai K."/>
            <person name="Kimura K."/>
            <person name="Makita H."/>
            <person name="Sekine M."/>
            <person name="Obayashi M."/>
            <person name="Nishi T."/>
            <person name="Shibahara T."/>
            <person name="Tanaka T."/>
            <person name="Ishii S."/>
            <person name="Yamamoto J."/>
            <person name="Saito K."/>
            <person name="Kawai Y."/>
            <person name="Isono Y."/>
            <person name="Nakamura Y."/>
            <person name="Nagahari K."/>
            <person name="Murakami K."/>
            <person name="Yasuda T."/>
            <person name="Iwayanagi T."/>
            <person name="Wagatsuma M."/>
            <person name="Shiratori A."/>
            <person name="Sudo H."/>
            <person name="Hosoiri T."/>
            <person name="Kaku Y."/>
            <person name="Kodaira H."/>
            <person name="Kondo H."/>
            <person name="Sugawara M."/>
            <person name="Takahashi M."/>
            <person name="Kanda K."/>
            <person name="Yokoi T."/>
            <person name="Furuya T."/>
            <person name="Kikkawa E."/>
            <person name="Omura Y."/>
            <person name="Abe K."/>
            <person name="Kamihara K."/>
            <person name="Katsuta N."/>
            <person name="Sato K."/>
            <person name="Tanikawa M."/>
            <person name="Yamazaki M."/>
            <person name="Ninomiya K."/>
            <person name="Ishibashi T."/>
            <person name="Yamashita H."/>
            <person name="Murakawa K."/>
            <person name="Fujimori K."/>
            <person name="Tanai H."/>
            <person name="Kimata M."/>
            <person name="Watanabe M."/>
            <person name="Hiraoka S."/>
            <person name="Chiba Y."/>
            <person name="Ishida S."/>
            <person name="Ono Y."/>
            <person name="Takiguchi S."/>
            <person name="Watanabe S."/>
            <person name="Yosida M."/>
            <person name="Hotuta T."/>
            <person name="Kusano J."/>
            <person name="Kanehori K."/>
            <person name="Takahashi-Fujii A."/>
            <person name="Hara H."/>
            <person name="Tanase T.-O."/>
            <person name="Nomura Y."/>
            <person name="Togiya S."/>
            <person name="Komai F."/>
            <person name="Hara R."/>
            <person name="Takeuchi K."/>
            <person name="Arita M."/>
            <person name="Imose N."/>
            <person name="Musashino K."/>
            <person name="Yuuki H."/>
            <person name="Oshima A."/>
            <person name="Sasaki N."/>
            <person name="Aotsuka S."/>
            <person name="Yoshikawa Y."/>
            <person name="Matsunawa H."/>
            <person name="Ichihara T."/>
            <person name="Shiohata N."/>
            <person name="Sano S."/>
            <person name="Moriya S."/>
            <person name="Momiyama H."/>
            <person name="Satoh N."/>
            <person name="Takami S."/>
            <person name="Terashima Y."/>
            <person name="Suzuki O."/>
            <person name="Nakagawa S."/>
            <person name="Senoh A."/>
            <person name="Mizoguchi H."/>
            <person name="Goto Y."/>
            <person name="Shimizu F."/>
            <person name="Wakebe H."/>
            <person name="Hishigaki H."/>
            <person name="Watanabe T."/>
            <person name="Sugiyama A."/>
            <person name="Takemoto M."/>
            <person name="Kawakami B."/>
            <person name="Yamazaki M."/>
            <person name="Watanabe K."/>
            <person name="Kumagai A."/>
            <person name="Itakura S."/>
            <person name="Fukuzumi Y."/>
            <person name="Fujimori Y."/>
            <person name="Komiyama M."/>
            <person name="Tashiro H."/>
            <person name="Tanigami A."/>
            <person name="Fujiwara T."/>
            <person name="Ono T."/>
            <person name="Yamada K."/>
            <person name="Fujii Y."/>
            <person name="Ozaki K."/>
            <person name="Hirao M."/>
            <person name="Ohmori Y."/>
            <person name="Kawabata A."/>
            <person name="Hikiji T."/>
            <person name="Kobatake N."/>
            <person name="Inagaki H."/>
            <person name="Ikema Y."/>
            <person name="Okamoto S."/>
            <person name="Okitani R."/>
            <person name="Kawakami T."/>
            <person name="Noguchi S."/>
            <person name="Itoh T."/>
            <person name="Shigeta K."/>
            <person name="Senba T."/>
            <person name="Matsumura K."/>
            <person name="Nakajima Y."/>
            <person name="Mizuno T."/>
            <person name="Morinaga M."/>
            <person name="Sasaki M."/>
            <person name="Togashi T."/>
            <person name="Oyama M."/>
            <person name="Hata H."/>
            <person name="Watanabe M."/>
            <person name="Komatsu T."/>
            <person name="Mizushima-Sugano J."/>
            <person name="Satoh T."/>
            <person name="Shirai Y."/>
            <person name="Takahashi Y."/>
            <person name="Nakagawa K."/>
            <person name="Okumura K."/>
            <person name="Nagase T."/>
            <person name="Nomura N."/>
            <person name="Kikuchi H."/>
            <person name="Masuho Y."/>
            <person name="Yamashita R."/>
            <person name="Nakai K."/>
            <person name="Yada T."/>
            <person name="Nakamura Y."/>
            <person name="Ohara O."/>
            <person name="Isogai T."/>
            <person name="Sugano S."/>
        </authorList>
    </citation>
    <scope>NUCLEOTIDE SEQUENCE [LARGE SCALE MRNA] (ISOFORM 2)</scope>
    <source>
        <tissue>Thymus</tissue>
    </source>
</reference>
<reference key="3">
    <citation type="journal article" date="2004" name="Nature">
        <title>The DNA sequence and comparative analysis of human chromosome 10.</title>
        <authorList>
            <person name="Deloukas P."/>
            <person name="Earthrowl M.E."/>
            <person name="Grafham D.V."/>
            <person name="Rubenfield M."/>
            <person name="French L."/>
            <person name="Steward C.A."/>
            <person name="Sims S.K."/>
            <person name="Jones M.C."/>
            <person name="Searle S."/>
            <person name="Scott C."/>
            <person name="Howe K."/>
            <person name="Hunt S.E."/>
            <person name="Andrews T.D."/>
            <person name="Gilbert J.G.R."/>
            <person name="Swarbreck D."/>
            <person name="Ashurst J.L."/>
            <person name="Taylor A."/>
            <person name="Battles J."/>
            <person name="Bird C.P."/>
            <person name="Ainscough R."/>
            <person name="Almeida J.P."/>
            <person name="Ashwell R.I.S."/>
            <person name="Ambrose K.D."/>
            <person name="Babbage A.K."/>
            <person name="Bagguley C.L."/>
            <person name="Bailey J."/>
            <person name="Banerjee R."/>
            <person name="Bates K."/>
            <person name="Beasley H."/>
            <person name="Bray-Allen S."/>
            <person name="Brown A.J."/>
            <person name="Brown J.Y."/>
            <person name="Burford D.C."/>
            <person name="Burrill W."/>
            <person name="Burton J."/>
            <person name="Cahill P."/>
            <person name="Camire D."/>
            <person name="Carter N.P."/>
            <person name="Chapman J.C."/>
            <person name="Clark S.Y."/>
            <person name="Clarke G."/>
            <person name="Clee C.M."/>
            <person name="Clegg S."/>
            <person name="Corby N."/>
            <person name="Coulson A."/>
            <person name="Dhami P."/>
            <person name="Dutta I."/>
            <person name="Dunn M."/>
            <person name="Faulkner L."/>
            <person name="Frankish A."/>
            <person name="Frankland J.A."/>
            <person name="Garner P."/>
            <person name="Garnett J."/>
            <person name="Gribble S."/>
            <person name="Griffiths C."/>
            <person name="Grocock R."/>
            <person name="Gustafson E."/>
            <person name="Hammond S."/>
            <person name="Harley J.L."/>
            <person name="Hart E."/>
            <person name="Heath P.D."/>
            <person name="Ho T.P."/>
            <person name="Hopkins B."/>
            <person name="Horne J."/>
            <person name="Howden P.J."/>
            <person name="Huckle E."/>
            <person name="Hynds C."/>
            <person name="Johnson C."/>
            <person name="Johnson D."/>
            <person name="Kana A."/>
            <person name="Kay M."/>
            <person name="Kimberley A.M."/>
            <person name="Kershaw J.K."/>
            <person name="Kokkinaki M."/>
            <person name="Laird G.K."/>
            <person name="Lawlor S."/>
            <person name="Lee H.M."/>
            <person name="Leongamornlert D.A."/>
            <person name="Laird G."/>
            <person name="Lloyd C."/>
            <person name="Lloyd D.M."/>
            <person name="Loveland J."/>
            <person name="Lovell J."/>
            <person name="McLaren S."/>
            <person name="McLay K.E."/>
            <person name="McMurray A."/>
            <person name="Mashreghi-Mohammadi M."/>
            <person name="Matthews L."/>
            <person name="Milne S."/>
            <person name="Nickerson T."/>
            <person name="Nguyen M."/>
            <person name="Overton-Larty E."/>
            <person name="Palmer S.A."/>
            <person name="Pearce A.V."/>
            <person name="Peck A.I."/>
            <person name="Pelan S."/>
            <person name="Phillimore B."/>
            <person name="Porter K."/>
            <person name="Rice C.M."/>
            <person name="Rogosin A."/>
            <person name="Ross M.T."/>
            <person name="Sarafidou T."/>
            <person name="Sehra H.K."/>
            <person name="Shownkeen R."/>
            <person name="Skuce C.D."/>
            <person name="Smith M."/>
            <person name="Standring L."/>
            <person name="Sycamore N."/>
            <person name="Tester J."/>
            <person name="Thorpe A."/>
            <person name="Torcasso W."/>
            <person name="Tracey A."/>
            <person name="Tromans A."/>
            <person name="Tsolas J."/>
            <person name="Wall M."/>
            <person name="Walsh J."/>
            <person name="Wang H."/>
            <person name="Weinstock K."/>
            <person name="West A.P."/>
            <person name="Willey D.L."/>
            <person name="Whitehead S.L."/>
            <person name="Wilming L."/>
            <person name="Wray P.W."/>
            <person name="Young L."/>
            <person name="Chen Y."/>
            <person name="Lovering R.C."/>
            <person name="Moschonas N.K."/>
            <person name="Siebert R."/>
            <person name="Fechtel K."/>
            <person name="Bentley D."/>
            <person name="Durbin R.M."/>
            <person name="Hubbard T."/>
            <person name="Doucette-Stamm L."/>
            <person name="Beck S."/>
            <person name="Smith D.R."/>
            <person name="Rogers J."/>
        </authorList>
    </citation>
    <scope>NUCLEOTIDE SEQUENCE [LARGE SCALE GENOMIC DNA]</scope>
</reference>
<reference key="4">
    <citation type="journal article" date="2004" name="Genome Res.">
        <title>The status, quality, and expansion of the NIH full-length cDNA project: the Mammalian Gene Collection (MGC).</title>
        <authorList>
            <consortium name="The MGC Project Team"/>
        </authorList>
    </citation>
    <scope>NUCLEOTIDE SEQUENCE [LARGE SCALE MRNA] (ISOFORM 1)</scope>
    <scope>VARIANT SER-109</scope>
    <source>
        <tissue>Muscle</tissue>
    </source>
</reference>
<reference key="5">
    <citation type="journal article" date="1999" name="FEBS Lett.">
        <title>Hypothetical protein KIAA0079 is a mammalian homologue of yeast Sec24p.</title>
        <authorList>
            <person name="Tani K."/>
            <person name="Oyama Y."/>
            <person name="Hatsuzawa K."/>
            <person name="Tagaya M."/>
        </authorList>
    </citation>
    <scope>FUNCTION</scope>
    <scope>SUBUNIT</scope>
</reference>
<reference key="6">
    <citation type="journal article" date="1999" name="Biochem. Biophys. Res. Commun.">
        <title>A family of mammalian proteins homologous to yeast Sec24p.</title>
        <authorList>
            <person name="Tang B.L."/>
            <person name="Kausalya J."/>
            <person name="Low D.Y.H."/>
            <person name="Lock M.L."/>
            <person name="Hong W."/>
        </authorList>
    </citation>
    <scope>SUBCELLULAR LOCATION</scope>
    <scope>TISSUE SPECIFICITY</scope>
</reference>
<reference key="7">
    <citation type="journal article" date="1999" name="J. Biol. Chem.">
        <title>Sec24 proteins and sorting at the endoplasmic reticulum.</title>
        <authorList>
            <person name="Pagano A."/>
            <person name="Letourneur F."/>
            <person name="Garcia-Estefania D."/>
            <person name="Carpentier J.-L."/>
            <person name="Orci L."/>
            <person name="Paccaud J.-P."/>
        </authorList>
    </citation>
    <scope>SUBUNIT</scope>
    <scope>SUBCELLULAR LOCATION</scope>
    <scope>TOPOLOGY</scope>
</reference>
<reference key="8">
    <citation type="journal article" date="2007" name="J. Biol. Chem.">
        <title>Mammalian Sec16/p250 plays a role in membrane traffic from the endoplasmic reticulum.</title>
        <authorList>
            <person name="Iinuma T."/>
            <person name="Shiga A."/>
            <person name="Nakamoto K."/>
            <person name="O'Brien M.B."/>
            <person name="Aridor M."/>
            <person name="Arimitsu N."/>
            <person name="Tagaya M."/>
            <person name="Tani K."/>
        </authorList>
    </citation>
    <scope>INTERACTION WITH DDHD1</scope>
</reference>
<reference key="9">
    <citation type="journal article" date="2007" name="Mol. Cell">
        <title>The transport signal on Sec22 for packaging into COPII-coated vesicles is a conformational epitope.</title>
        <authorList>
            <person name="Mancias J.D."/>
            <person name="Goldberg J."/>
        </authorList>
    </citation>
    <scope>FUNCTION</scope>
    <scope>SUBUNIT</scope>
</reference>
<reference key="10">
    <citation type="journal article" date="2008" name="Proc. Natl. Acad. Sci. U.S.A.">
        <title>A quantitative atlas of mitotic phosphorylation.</title>
        <authorList>
            <person name="Dephoure N."/>
            <person name="Zhou C."/>
            <person name="Villen J."/>
            <person name="Beausoleil S.A."/>
            <person name="Bakalarski C.E."/>
            <person name="Elledge S.J."/>
            <person name="Gygi S.P."/>
        </authorList>
    </citation>
    <scope>PHOSPHORYLATION [LARGE SCALE ANALYSIS] AT THR-214</scope>
    <scope>IDENTIFICATION BY MASS SPECTROMETRY [LARGE SCALE ANALYSIS]</scope>
    <source>
        <tissue>Cervix carcinoma</tissue>
    </source>
</reference>
<reference key="11">
    <citation type="journal article" date="2010" name="J. Cell Sci.">
        <title>Selective export of human GPI-anchored proteins from the endoplasmic reticulum.</title>
        <authorList>
            <person name="Bonnon C."/>
            <person name="Wendeler M.W."/>
            <person name="Paccaud J.P."/>
            <person name="Hauri H.P."/>
        </authorList>
    </citation>
    <scope>FUNCTION</scope>
    <scope>INTERACTION WITH TMED2 AND TMED10</scope>
</reference>
<reference key="12">
    <citation type="journal article" date="2011" name="BMC Syst. Biol.">
        <title>Initial characterization of the human central proteome.</title>
        <authorList>
            <person name="Burkard T.R."/>
            <person name="Planyavsky M."/>
            <person name="Kaupe I."/>
            <person name="Breitwieser F.P."/>
            <person name="Buerckstuemmer T."/>
            <person name="Bennett K.L."/>
            <person name="Superti-Furga G."/>
            <person name="Colinge J."/>
        </authorList>
    </citation>
    <scope>IDENTIFICATION BY MASS SPECTROMETRY [LARGE SCALE ANALYSIS]</scope>
</reference>
<reference key="13">
    <citation type="journal article" date="2013" name="J. Proteome Res.">
        <title>Toward a comprehensive characterization of a human cancer cell phosphoproteome.</title>
        <authorList>
            <person name="Zhou H."/>
            <person name="Di Palma S."/>
            <person name="Preisinger C."/>
            <person name="Peng M."/>
            <person name="Polat A.N."/>
            <person name="Heck A.J."/>
            <person name="Mohammed S."/>
        </authorList>
    </citation>
    <scope>IDENTIFICATION BY MASS SPECTROMETRY [LARGE SCALE ANALYSIS]</scope>
    <source>
        <tissue>Erythroleukemia</tissue>
    </source>
</reference>
<reference key="14">
    <citation type="journal article" date="2014" name="J. Proteomics">
        <title>An enzyme assisted RP-RPLC approach for in-depth analysis of human liver phosphoproteome.</title>
        <authorList>
            <person name="Bian Y."/>
            <person name="Song C."/>
            <person name="Cheng K."/>
            <person name="Dong M."/>
            <person name="Wang F."/>
            <person name="Huang J."/>
            <person name="Sun D."/>
            <person name="Wang L."/>
            <person name="Ye M."/>
            <person name="Zou H."/>
        </authorList>
    </citation>
    <scope>IDENTIFICATION BY MASS SPECTROMETRY [LARGE SCALE ANALYSIS]</scope>
    <source>
        <tissue>Liver</tissue>
    </source>
</reference>
<reference key="15">
    <citation type="journal article" date="2015" name="Proteomics">
        <title>N-terminome analysis of the human mitochondrial proteome.</title>
        <authorList>
            <person name="Vaca Jacome A.S."/>
            <person name="Rabilloud T."/>
            <person name="Schaeffer-Reiss C."/>
            <person name="Rompais M."/>
            <person name="Ayoub D."/>
            <person name="Lane L."/>
            <person name="Bairoch A."/>
            <person name="Van Dorsselaer A."/>
            <person name="Carapito C."/>
        </authorList>
    </citation>
    <scope>IDENTIFICATION BY MASS SPECTROMETRY [LARGE SCALE ANALYSIS]</scope>
</reference>
<reference key="16">
    <citation type="journal article" date="2019" name="Nature">
        <title>Autophagy induction via STING trafficking is a primordial function of the cGAS pathway.</title>
        <authorList>
            <person name="Gui X."/>
            <person name="Yang H."/>
            <person name="Li T."/>
            <person name="Tan X."/>
            <person name="Shi P."/>
            <person name="Li M."/>
            <person name="Du F."/>
            <person name="Chen Z.J."/>
        </authorList>
    </citation>
    <scope>INTERACTION WITH STING1</scope>
</reference>
<reference evidence="16" key="17">
    <citation type="journal article" date="2008" name="EMBO J.">
        <title>Structural basis of cargo membrane protein discrimination by the human COPII coat machinery.</title>
        <authorList>
            <person name="Mancias J.D."/>
            <person name="Goldberg J."/>
        </authorList>
    </citation>
    <scope>X-RAY CRYSTALLOGRAPHY (2.35 ANGSTROMS) OF 329-1094 IN COMPLEX WITH ZINC</scope>
    <scope>FUNCTION</scope>
    <scope>INTERACTION WITH GOSR2 AND STX5</scope>
    <scope>MUTAGENESIS OF 895-LEU--LEU-897</scope>
</reference>
<gene>
    <name evidence="15" type="primary">SEC24C</name>
    <name evidence="14" type="synonym">KIAA0079</name>
</gene>
<protein>
    <recommendedName>
        <fullName evidence="13">Protein transport protein Sec24C</fullName>
    </recommendedName>
    <alternativeName>
        <fullName>SEC24-related protein C</fullName>
    </alternativeName>
</protein>
<accession>P53992</accession>
<accession>B4DZT4</accession>
<accession>Q8WV25</accession>
<dbReference type="EMBL" id="D38555">
    <property type="protein sequence ID" value="BAA07558.2"/>
    <property type="status" value="ALT_SEQ"/>
    <property type="molecule type" value="mRNA"/>
</dbReference>
<dbReference type="EMBL" id="AK303085">
    <property type="protein sequence ID" value="BAG64196.1"/>
    <property type="molecule type" value="mRNA"/>
</dbReference>
<dbReference type="EMBL" id="AC022400">
    <property type="status" value="NOT_ANNOTATED_CDS"/>
    <property type="molecule type" value="Genomic_DNA"/>
</dbReference>
<dbReference type="EMBL" id="BC018928">
    <property type="protein sequence ID" value="AAH18928.1"/>
    <property type="molecule type" value="mRNA"/>
</dbReference>
<dbReference type="CCDS" id="CCDS7332.1">
    <molecule id="P53992-1"/>
</dbReference>
<dbReference type="RefSeq" id="NP_004913.2">
    <molecule id="P53992-1"/>
    <property type="nucleotide sequence ID" value="NM_004922.3"/>
</dbReference>
<dbReference type="RefSeq" id="NP_940999.1">
    <molecule id="P53992-1"/>
    <property type="nucleotide sequence ID" value="NM_198597.3"/>
</dbReference>
<dbReference type="RefSeq" id="XP_047281989.1">
    <molecule id="P53992-1"/>
    <property type="nucleotide sequence ID" value="XM_047426033.1"/>
</dbReference>
<dbReference type="RefSeq" id="XP_047281990.1">
    <molecule id="P53992-1"/>
    <property type="nucleotide sequence ID" value="XM_047426034.1"/>
</dbReference>
<dbReference type="RefSeq" id="XP_054223204.1">
    <molecule id="P53992-1"/>
    <property type="nucleotide sequence ID" value="XM_054367229.1"/>
</dbReference>
<dbReference type="RefSeq" id="XP_054223205.1">
    <molecule id="P53992-1"/>
    <property type="nucleotide sequence ID" value="XM_054367230.1"/>
</dbReference>
<dbReference type="PDB" id="3EH2">
    <property type="method" value="X-ray"/>
    <property type="resolution" value="2.35 A"/>
    <property type="chains" value="A/B/C=329-1094"/>
</dbReference>
<dbReference type="PDB" id="6PU1">
    <property type="method" value="X-ray"/>
    <property type="resolution" value="2.28 A"/>
    <property type="chains" value="B=228-242"/>
</dbReference>
<dbReference type="PDB" id="8CL3">
    <property type="method" value="EM"/>
    <property type="resolution" value="3.14 A"/>
    <property type="chains" value="B=228-242"/>
</dbReference>
<dbReference type="PDBsum" id="3EH2"/>
<dbReference type="PDBsum" id="6PU1"/>
<dbReference type="PDBsum" id="8CL3"/>
<dbReference type="EMDB" id="EMD-16711"/>
<dbReference type="SMR" id="P53992"/>
<dbReference type="BioGRID" id="114991">
    <property type="interactions" value="217"/>
</dbReference>
<dbReference type="ComplexPortal" id="CPX-2360">
    <property type="entry name" value="COPII vesicle coat complex"/>
</dbReference>
<dbReference type="CORUM" id="P53992"/>
<dbReference type="DIP" id="DIP-30981N"/>
<dbReference type="FunCoup" id="P53992">
    <property type="interactions" value="4250"/>
</dbReference>
<dbReference type="IntAct" id="P53992">
    <property type="interactions" value="62"/>
</dbReference>
<dbReference type="MINT" id="P53992"/>
<dbReference type="STRING" id="9606.ENSP00000343405"/>
<dbReference type="GlyCosmos" id="P53992">
    <property type="glycosylation" value="5 sites, 1 glycan"/>
</dbReference>
<dbReference type="GlyGen" id="P53992">
    <property type="glycosylation" value="15 sites, 1 O-linked glycan (14 sites)"/>
</dbReference>
<dbReference type="iPTMnet" id="P53992"/>
<dbReference type="MetOSite" id="P53992"/>
<dbReference type="PhosphoSitePlus" id="P53992"/>
<dbReference type="SwissPalm" id="P53992"/>
<dbReference type="BioMuta" id="SEC24C"/>
<dbReference type="DMDM" id="257051070"/>
<dbReference type="jPOST" id="P53992"/>
<dbReference type="MassIVE" id="P53992"/>
<dbReference type="PaxDb" id="9606-ENSP00000343405"/>
<dbReference type="PeptideAtlas" id="P53992"/>
<dbReference type="ProteomicsDB" id="5623"/>
<dbReference type="ProteomicsDB" id="56640">
    <molecule id="P53992-1"/>
</dbReference>
<dbReference type="Pumba" id="P53992"/>
<dbReference type="Antibodypedia" id="45407">
    <property type="antibodies" value="158 antibodies from 27 providers"/>
</dbReference>
<dbReference type="DNASU" id="9632"/>
<dbReference type="Ensembl" id="ENST00000339365.2">
    <molecule id="P53992-1"/>
    <property type="protein sequence ID" value="ENSP00000343405.2"/>
    <property type="gene ID" value="ENSG00000176986.16"/>
</dbReference>
<dbReference type="Ensembl" id="ENST00000345254.9">
    <molecule id="P53992-1"/>
    <property type="protein sequence ID" value="ENSP00000321845.6"/>
    <property type="gene ID" value="ENSG00000176986.16"/>
</dbReference>
<dbReference type="GeneID" id="9632"/>
<dbReference type="KEGG" id="hsa:9632"/>
<dbReference type="MANE-Select" id="ENST00000345254.9">
    <property type="protein sequence ID" value="ENSP00000321845.6"/>
    <property type="RefSeq nucleotide sequence ID" value="NM_198597.3"/>
    <property type="RefSeq protein sequence ID" value="NP_940999.1"/>
</dbReference>
<dbReference type="UCSC" id="uc001juw.4">
    <molecule id="P53992-1"/>
    <property type="organism name" value="human"/>
</dbReference>
<dbReference type="AGR" id="HGNC:10705"/>
<dbReference type="CTD" id="9632"/>
<dbReference type="DisGeNET" id="9632"/>
<dbReference type="GeneCards" id="SEC24C"/>
<dbReference type="HGNC" id="HGNC:10705">
    <property type="gene designation" value="SEC24C"/>
</dbReference>
<dbReference type="HPA" id="ENSG00000176986">
    <property type="expression patterns" value="Low tissue specificity"/>
</dbReference>
<dbReference type="MalaCards" id="SEC24C"/>
<dbReference type="MIM" id="607185">
    <property type="type" value="gene"/>
</dbReference>
<dbReference type="neXtProt" id="NX_P53992"/>
<dbReference type="OpenTargets" id="ENSG00000176986"/>
<dbReference type="Orphanet" id="567">
    <property type="disease" value="22q11.2 deletion syndrome"/>
</dbReference>
<dbReference type="PharmGKB" id="PA35628"/>
<dbReference type="VEuPathDB" id="HostDB:ENSG00000176986"/>
<dbReference type="eggNOG" id="KOG1984">
    <property type="taxonomic scope" value="Eukaryota"/>
</dbReference>
<dbReference type="GeneTree" id="ENSGT01130000278419"/>
<dbReference type="HOGENOM" id="CLU_004589_1_1_1"/>
<dbReference type="InParanoid" id="P53992"/>
<dbReference type="OMA" id="INPFMTF"/>
<dbReference type="OrthoDB" id="49016at2759"/>
<dbReference type="PAN-GO" id="P53992">
    <property type="GO annotations" value="5 GO annotations based on evolutionary models"/>
</dbReference>
<dbReference type="PhylomeDB" id="P53992"/>
<dbReference type="TreeFam" id="TF300464"/>
<dbReference type="PathwayCommons" id="P53992"/>
<dbReference type="Reactome" id="R-HSA-1655829">
    <property type="pathway name" value="Regulation of cholesterol biosynthesis by SREBP (SREBF)"/>
</dbReference>
<dbReference type="Reactome" id="R-HSA-204005">
    <property type="pathway name" value="COPII-mediated vesicle transport"/>
</dbReference>
<dbReference type="Reactome" id="R-HSA-2132295">
    <property type="pathway name" value="MHC class II antigen presentation"/>
</dbReference>
<dbReference type="Reactome" id="R-HSA-5694530">
    <property type="pathway name" value="Cargo concentration in the ER"/>
</dbReference>
<dbReference type="Reactome" id="R-HSA-9705671">
    <property type="pathway name" value="SARS-CoV-2 activates/modulates innate and adaptive immune responses"/>
</dbReference>
<dbReference type="Reactome" id="R-HSA-983170">
    <property type="pathway name" value="Antigen Presentation: Folding, assembly and peptide loading of class I MHC"/>
</dbReference>
<dbReference type="SignaLink" id="P53992"/>
<dbReference type="SIGNOR" id="P53992"/>
<dbReference type="BioGRID-ORCS" id="9632">
    <property type="hits" value="17 hits in 1157 CRISPR screens"/>
</dbReference>
<dbReference type="CD-CODE" id="DEE660B4">
    <property type="entry name" value="Stress granule"/>
</dbReference>
<dbReference type="CD-CODE" id="FB4E32DD">
    <property type="entry name" value="Presynaptic clusters and postsynaptic densities"/>
</dbReference>
<dbReference type="ChiTaRS" id="SEC24C">
    <property type="organism name" value="human"/>
</dbReference>
<dbReference type="EvolutionaryTrace" id="P53992"/>
<dbReference type="GeneWiki" id="SEC24C"/>
<dbReference type="GenomeRNAi" id="9632"/>
<dbReference type="Pharos" id="P53992">
    <property type="development level" value="Tbio"/>
</dbReference>
<dbReference type="PRO" id="PR:P53992"/>
<dbReference type="Proteomes" id="UP000005640">
    <property type="component" value="Chromosome 10"/>
</dbReference>
<dbReference type="RNAct" id="P53992">
    <property type="molecule type" value="protein"/>
</dbReference>
<dbReference type="Bgee" id="ENSG00000176986">
    <property type="expression patterns" value="Expressed in lower esophagus mucosa and 208 other cell types or tissues"/>
</dbReference>
<dbReference type="ExpressionAtlas" id="P53992">
    <property type="expression patterns" value="baseline and differential"/>
</dbReference>
<dbReference type="GO" id="GO:0030127">
    <property type="term" value="C:COPII vesicle coat"/>
    <property type="evidence" value="ECO:0000314"/>
    <property type="project" value="UniProtKB"/>
</dbReference>
<dbReference type="GO" id="GO:0005829">
    <property type="term" value="C:cytosol"/>
    <property type="evidence" value="ECO:0000314"/>
    <property type="project" value="UniProtKB"/>
</dbReference>
<dbReference type="GO" id="GO:0070971">
    <property type="term" value="C:endoplasmic reticulum exit site"/>
    <property type="evidence" value="ECO:0000318"/>
    <property type="project" value="GO_Central"/>
</dbReference>
<dbReference type="GO" id="GO:0005789">
    <property type="term" value="C:endoplasmic reticulum membrane"/>
    <property type="evidence" value="ECO:0000304"/>
    <property type="project" value="Reactome"/>
</dbReference>
<dbReference type="GO" id="GO:0012507">
    <property type="term" value="C:ER to Golgi transport vesicle membrane"/>
    <property type="evidence" value="ECO:0000304"/>
    <property type="project" value="Reactome"/>
</dbReference>
<dbReference type="GO" id="GO:0000149">
    <property type="term" value="F:SNARE binding"/>
    <property type="evidence" value="ECO:0000353"/>
    <property type="project" value="UniProtKB"/>
</dbReference>
<dbReference type="GO" id="GO:0008270">
    <property type="term" value="F:zinc ion binding"/>
    <property type="evidence" value="ECO:0000314"/>
    <property type="project" value="UniProtKB"/>
</dbReference>
<dbReference type="GO" id="GO:0090110">
    <property type="term" value="P:COPII-coated vesicle cargo loading"/>
    <property type="evidence" value="ECO:0000314"/>
    <property type="project" value="UniProtKB"/>
</dbReference>
<dbReference type="GO" id="GO:0006888">
    <property type="term" value="P:endoplasmic reticulum to Golgi vesicle-mediated transport"/>
    <property type="evidence" value="ECO:0000315"/>
    <property type="project" value="UniProtKB"/>
</dbReference>
<dbReference type="GO" id="GO:0001701">
    <property type="term" value="P:in utero embryonic development"/>
    <property type="evidence" value="ECO:0007669"/>
    <property type="project" value="Ensembl"/>
</dbReference>
<dbReference type="GO" id="GO:0006886">
    <property type="term" value="P:intracellular protein transport"/>
    <property type="evidence" value="ECO:0007669"/>
    <property type="project" value="InterPro"/>
</dbReference>
<dbReference type="CDD" id="cd01479">
    <property type="entry name" value="Sec24-like"/>
    <property type="match status" value="1"/>
</dbReference>
<dbReference type="FunFam" id="1.20.120.730:FF:000002">
    <property type="entry name" value="Protein transport protein Sec24C isoform C"/>
    <property type="match status" value="1"/>
</dbReference>
<dbReference type="FunFam" id="3.40.20.10:FF:000023">
    <property type="entry name" value="protein transport protein Sec24C isoform X1"/>
    <property type="match status" value="1"/>
</dbReference>
<dbReference type="FunFam" id="3.40.50.410:FF:000020">
    <property type="entry name" value="protein transport protein Sec24D isoform X1"/>
    <property type="match status" value="1"/>
</dbReference>
<dbReference type="FunFam" id="2.30.30.380:FF:000003">
    <property type="entry name" value="SEC24 homolog D, COPII coat complex component"/>
    <property type="match status" value="1"/>
</dbReference>
<dbReference type="Gene3D" id="2.60.40.1670">
    <property type="entry name" value="beta-sandwich domain of Sec23/24"/>
    <property type="match status" value="1"/>
</dbReference>
<dbReference type="Gene3D" id="1.20.120.730">
    <property type="entry name" value="Sec23/Sec24 helical domain"/>
    <property type="match status" value="1"/>
</dbReference>
<dbReference type="Gene3D" id="3.40.20.10">
    <property type="entry name" value="Severin"/>
    <property type="match status" value="1"/>
</dbReference>
<dbReference type="Gene3D" id="3.40.50.410">
    <property type="entry name" value="von Willebrand factor, type A domain"/>
    <property type="match status" value="1"/>
</dbReference>
<dbReference type="Gene3D" id="2.30.30.380">
    <property type="entry name" value="Zn-finger domain of Sec23/24"/>
    <property type="match status" value="1"/>
</dbReference>
<dbReference type="InterPro" id="IPR029006">
    <property type="entry name" value="ADF-H/Gelsolin-like_dom_sf"/>
</dbReference>
<dbReference type="InterPro" id="IPR007123">
    <property type="entry name" value="Gelsolin-like_dom"/>
</dbReference>
<dbReference type="InterPro" id="IPR036180">
    <property type="entry name" value="Gelsolin-like_dom_sf"/>
</dbReference>
<dbReference type="InterPro" id="IPR006900">
    <property type="entry name" value="Sec23/24_helical_dom"/>
</dbReference>
<dbReference type="InterPro" id="IPR036175">
    <property type="entry name" value="Sec23/24_helical_dom_sf"/>
</dbReference>
<dbReference type="InterPro" id="IPR006896">
    <property type="entry name" value="Sec23/24_trunk_dom"/>
</dbReference>
<dbReference type="InterPro" id="IPR012990">
    <property type="entry name" value="Sec23_24_beta_S"/>
</dbReference>
<dbReference type="InterPro" id="IPR050550">
    <property type="entry name" value="SEC23_SEC24_subfamily"/>
</dbReference>
<dbReference type="InterPro" id="IPR041742">
    <property type="entry name" value="Sec24-like_trunk_dom"/>
</dbReference>
<dbReference type="InterPro" id="IPR036465">
    <property type="entry name" value="vWFA_dom_sf"/>
</dbReference>
<dbReference type="InterPro" id="IPR006895">
    <property type="entry name" value="Znf_Sec23_Sec24"/>
</dbReference>
<dbReference type="InterPro" id="IPR036174">
    <property type="entry name" value="Znf_Sec23_Sec24_sf"/>
</dbReference>
<dbReference type="PANTHER" id="PTHR13803:SF5">
    <property type="entry name" value="PROTEIN TRANSPORT PROTEIN SEC24C"/>
    <property type="match status" value="1"/>
</dbReference>
<dbReference type="PANTHER" id="PTHR13803">
    <property type="entry name" value="SEC24-RELATED PROTEIN"/>
    <property type="match status" value="1"/>
</dbReference>
<dbReference type="Pfam" id="PF00626">
    <property type="entry name" value="Gelsolin"/>
    <property type="match status" value="1"/>
</dbReference>
<dbReference type="Pfam" id="PF08033">
    <property type="entry name" value="Sec23_BS"/>
    <property type="match status" value="1"/>
</dbReference>
<dbReference type="Pfam" id="PF04815">
    <property type="entry name" value="Sec23_helical"/>
    <property type="match status" value="1"/>
</dbReference>
<dbReference type="Pfam" id="PF04811">
    <property type="entry name" value="Sec23_trunk"/>
    <property type="match status" value="1"/>
</dbReference>
<dbReference type="Pfam" id="PF04810">
    <property type="entry name" value="zf-Sec23_Sec24"/>
    <property type="match status" value="1"/>
</dbReference>
<dbReference type="SUPFAM" id="SSF81995">
    <property type="entry name" value="beta-sandwich domain of Sec23/24"/>
    <property type="match status" value="1"/>
</dbReference>
<dbReference type="SUPFAM" id="SSF82754">
    <property type="entry name" value="C-terminal, gelsolin-like domain of Sec23/24"/>
    <property type="match status" value="1"/>
</dbReference>
<dbReference type="SUPFAM" id="SSF81811">
    <property type="entry name" value="Helical domain of Sec23/24"/>
    <property type="match status" value="1"/>
</dbReference>
<dbReference type="SUPFAM" id="SSF53300">
    <property type="entry name" value="vWA-like"/>
    <property type="match status" value="1"/>
</dbReference>
<dbReference type="SUPFAM" id="SSF82919">
    <property type="entry name" value="Zn-finger domain of Sec23/24"/>
    <property type="match status" value="1"/>
</dbReference>
<comment type="function">
    <text evidence="4 8 9 10">Component of the coat protein complex II (COPII) which promotes the formation of transport vesicles from the endoplasmic reticulum (ER). The coat has two main functions, the physical deformation of the endoplasmic reticulum membrane into vesicles and the selection of cargo molecules for their transport to the Golgi complex (PubMed:10214955, PubMed:17499046, PubMed:18843296, PubMed:20427317). Plays a central role in cargo selection within the COPII complex and together with SEC24D may have a different specificity compared to SEC24A and SEC24B (PubMed:17499046, PubMed:18843296, PubMed:20427317). May more specifically package GPI-anchored proteins through the cargo receptor TMED10 (PubMed:20427317). May also be specific for IxM motif-containing cargos like the SNAREs GOSR2 and STX5 (PubMed:18843296).</text>
</comment>
<comment type="subunit">
    <text evidence="3 4 7 8 9 10 11">COPII is composed of at least five proteins: the Sec23/24 complex, the Sec13/31 complex and Sar1 (PubMed:10075675, PubMed:10214955, PubMed:17499046). Interacts with TMED2 and TMED10 (PubMed:20427317). Interacts with GOSR2 (via IxM motif) and STX5 (via IxM motif); recruits GOSR2 and STX5 into COPII-coated vesicles (PubMed:18843296). Interacts with DDHD1 (PubMed:17428803). Interacts with STING1; promoting STING1 translocation to the COPII vesicles (PubMed:30842662).</text>
</comment>
<comment type="interaction">
    <interactant intactId="EBI-81134">
        <id>P53992</id>
    </interactant>
    <interactant intactId="EBI-1757866">
        <id>P00540</id>
        <label>MOS</label>
    </interactant>
    <organismsDiffer>false</organismsDiffer>
    <experiments>4</experiments>
</comment>
<comment type="interaction">
    <interactant intactId="EBI-81134">
        <id>P53992</id>
    </interactant>
    <interactant intactId="EBI-81088">
        <id>Q15436</id>
        <label>SEC23A</label>
    </interactant>
    <organismsDiffer>false</organismsDiffer>
    <experiments>8</experiments>
</comment>
<comment type="interaction">
    <interactant intactId="EBI-81134">
        <id>P53992</id>
    </interactant>
    <interactant intactId="EBI-742673">
        <id>Q15437</id>
        <label>SEC23B</label>
    </interactant>
    <organismsDiffer>false</organismsDiffer>
    <experiments>5</experiments>
</comment>
<comment type="interaction">
    <interactant intactId="EBI-81134">
        <id>P53992</id>
    </interactant>
    <interactant intactId="EBI-346356">
        <id>O43516</id>
        <label>WIPF1</label>
    </interactant>
    <organismsDiffer>false</organismsDiffer>
    <experiments>3</experiments>
</comment>
<comment type="subcellular location">
    <subcellularLocation>
        <location evidence="3 5">Cytoplasmic vesicle</location>
        <location evidence="3 5">COPII-coated vesicle membrane</location>
        <topology evidence="3">Peripheral membrane protein</topology>
        <orientation evidence="3">Cytoplasmic side</orientation>
    </subcellularLocation>
    <subcellularLocation>
        <location evidence="3 5">Endoplasmic reticulum membrane</location>
        <topology evidence="3">Peripheral membrane protein</topology>
        <orientation evidence="3">Cytoplasmic side</orientation>
    </subcellularLocation>
    <subcellularLocation>
        <location evidence="3">Cytoplasm</location>
        <location evidence="3">Cytosol</location>
    </subcellularLocation>
</comment>
<comment type="alternative products">
    <event type="alternative splicing"/>
    <isoform>
        <id>P53992-1</id>
        <name>1</name>
        <sequence type="displayed"/>
    </isoform>
    <isoform>
        <id>P53992-2</id>
        <name>2</name>
        <sequence type="described" ref="VSP_056516"/>
    </isoform>
</comment>
<comment type="tissue specificity">
    <text evidence="5">Ubiquitous.</text>
</comment>
<comment type="similarity">
    <text evidence="13">Belongs to the SEC23/SEC24 family. SEC24 subfamily.</text>
</comment>
<comment type="sequence caution" evidence="13">
    <conflict type="frameshift">
        <sequence resource="EMBL-CDS" id="BAA07558"/>
    </conflict>
</comment>
<keyword id="KW-0002">3D-structure</keyword>
<keyword id="KW-0025">Alternative splicing</keyword>
<keyword id="KW-0963">Cytoplasm</keyword>
<keyword id="KW-0968">Cytoplasmic vesicle</keyword>
<keyword id="KW-0256">Endoplasmic reticulum</keyword>
<keyword id="KW-0931">ER-Golgi transport</keyword>
<keyword id="KW-0472">Membrane</keyword>
<keyword id="KW-0479">Metal-binding</keyword>
<keyword id="KW-0597">Phosphoprotein</keyword>
<keyword id="KW-0653">Protein transport</keyword>
<keyword id="KW-1267">Proteomics identification</keyword>
<keyword id="KW-1185">Reference proteome</keyword>
<keyword id="KW-0813">Transport</keyword>
<keyword id="KW-0862">Zinc</keyword>
<proteinExistence type="evidence at protein level"/>
<sequence length="1094" mass="118325">MNVNQSVPPVPPFGQPQPIYPGYHQSSYGGQSGSTAPAIPYGAYNGPVPGYQQTPPQGMSRAPPSSGAPPASTAQAPCGQAAYGQFGQGDVQNGPSSTVQMQRLPGSQPFGSPLAPVGNQPPVLQPYGPPPTSAQVATQLSGMQISGAVAPAPPSSGLGFGPPTSLASASGSFPNSGLYGSYPQGQAPPLSQAQGHPGIQTPQRSAPSQASSFTPPASGGPRLPSMTGPLLPGQSFGGPSVSQPNHVSSPPQALPPGTQMTGPLGPLPPMHSPQQPGYQPQQNGSFGPARGPQSNYGGPYPAAPTFGSQPGPPQPLPPKRLDPDAIPSPIQVIEDDRNNRGTEPFVTGVRGQVPPLVTTNFLVKDQGNASPRYIRCTSYNIPCTSDMAKQAQVPLAAVIKPLARLPPEEASPYVVDHGESGPLRCNRCKAYMCPFMQFIEGGRRFQCCFCSCINDVPPQYFQHLDHTGKRVDAYDRPELSLGSYEFLATVDYCKNNKFPSPPAFIFMIDVSYNAIRTGLVRLLCEELKSLLDFLPREGGAEESAIRVGFVTYNKVLHFYNVKSSLAQPQMMVVSDVADMFVPLLDGFLVNVNESRAVITSLLDQIPEMFADTRETETVFVPVIQAGMEALKAAECAGKLFLFHTSLPIAEAPGKLKNRDDRKLINTDKEKTLFQPQTGAYQTLAKECVAQGCCVDLFLFPNQYVDVATLSVVPQLTGGSVYKYASFQVENDQERFLSDLRRDVQKVVGFDAVMRVRTSTGIRAVDFFGAFYMSNTTDVELAGLDGDKTVTVEFKHDDRLNEESGALLQCALLYTSCAGQRRLRIHNLALNCCTQLADLYRNCETDTLINYMAKFAYRGVLNSPVKAVRDTLITQCAQILACYRKNCASPSSAGQLILPECMKLLPVYLNCVLKSDVLQPGAEVTTDDRAYVRQLVTSMDVTETNVFFYPRLLPLTKSPVESTTEPPAVRASEERLSNGDIYLLENGLNLFLWVGASVQQGVVQSLFSVSSFSQITSGLSVLPVLDNPLSKKVRGLIDSLRAQRSRYMKLTVVKQEDKMEMLFKHFLVEDKSLSGGASYVDFLCHMHKEIRQLLS</sequence>